<dbReference type="EC" id="4.2.1.19" evidence="1"/>
<dbReference type="EMBL" id="CP000560">
    <property type="protein sequence ID" value="ABS75541.1"/>
    <property type="molecule type" value="Genomic_DNA"/>
</dbReference>
<dbReference type="RefSeq" id="WP_007614023.1">
    <property type="nucleotide sequence ID" value="NC_009725.2"/>
</dbReference>
<dbReference type="SMR" id="A7Z965"/>
<dbReference type="GeneID" id="93082356"/>
<dbReference type="KEGG" id="bay:RBAM_032110"/>
<dbReference type="HOGENOM" id="CLU_044308_2_0_9"/>
<dbReference type="UniPathway" id="UPA00031">
    <property type="reaction ID" value="UER00011"/>
</dbReference>
<dbReference type="Proteomes" id="UP000001120">
    <property type="component" value="Chromosome"/>
</dbReference>
<dbReference type="GO" id="GO:0005737">
    <property type="term" value="C:cytoplasm"/>
    <property type="evidence" value="ECO:0007669"/>
    <property type="project" value="UniProtKB-SubCell"/>
</dbReference>
<dbReference type="GO" id="GO:0004424">
    <property type="term" value="F:imidazoleglycerol-phosphate dehydratase activity"/>
    <property type="evidence" value="ECO:0007669"/>
    <property type="project" value="UniProtKB-UniRule"/>
</dbReference>
<dbReference type="GO" id="GO:0000105">
    <property type="term" value="P:L-histidine biosynthetic process"/>
    <property type="evidence" value="ECO:0007669"/>
    <property type="project" value="UniProtKB-UniRule"/>
</dbReference>
<dbReference type="CDD" id="cd07914">
    <property type="entry name" value="IGPD"/>
    <property type="match status" value="1"/>
</dbReference>
<dbReference type="FunFam" id="3.30.230.40:FF:000001">
    <property type="entry name" value="Imidazoleglycerol-phosphate dehydratase HisB"/>
    <property type="match status" value="1"/>
</dbReference>
<dbReference type="FunFam" id="3.30.230.40:FF:000003">
    <property type="entry name" value="Imidazoleglycerol-phosphate dehydratase HisB"/>
    <property type="match status" value="1"/>
</dbReference>
<dbReference type="Gene3D" id="3.30.230.40">
    <property type="entry name" value="Imidazole glycerol phosphate dehydratase, domain 1"/>
    <property type="match status" value="2"/>
</dbReference>
<dbReference type="HAMAP" id="MF_00076">
    <property type="entry name" value="HisB"/>
    <property type="match status" value="1"/>
</dbReference>
<dbReference type="InterPro" id="IPR038494">
    <property type="entry name" value="IGPD_sf"/>
</dbReference>
<dbReference type="InterPro" id="IPR000807">
    <property type="entry name" value="ImidazoleglycerolP_deHydtase"/>
</dbReference>
<dbReference type="InterPro" id="IPR020565">
    <property type="entry name" value="ImidazoleglycerP_deHydtase_CS"/>
</dbReference>
<dbReference type="InterPro" id="IPR020568">
    <property type="entry name" value="Ribosomal_Su5_D2-typ_SF"/>
</dbReference>
<dbReference type="NCBIfam" id="NF002111">
    <property type="entry name" value="PRK00951.2-1"/>
    <property type="match status" value="1"/>
</dbReference>
<dbReference type="NCBIfam" id="NF002114">
    <property type="entry name" value="PRK00951.2-4"/>
    <property type="match status" value="1"/>
</dbReference>
<dbReference type="NCBIfam" id="NF002115">
    <property type="entry name" value="PRK00951.2-5"/>
    <property type="match status" value="1"/>
</dbReference>
<dbReference type="PANTHER" id="PTHR23133:SF2">
    <property type="entry name" value="IMIDAZOLEGLYCEROL-PHOSPHATE DEHYDRATASE"/>
    <property type="match status" value="1"/>
</dbReference>
<dbReference type="PANTHER" id="PTHR23133">
    <property type="entry name" value="IMIDAZOLEGLYCEROL-PHOSPHATE DEHYDRATASE HIS7"/>
    <property type="match status" value="1"/>
</dbReference>
<dbReference type="Pfam" id="PF00475">
    <property type="entry name" value="IGPD"/>
    <property type="match status" value="1"/>
</dbReference>
<dbReference type="SUPFAM" id="SSF54211">
    <property type="entry name" value="Ribosomal protein S5 domain 2-like"/>
    <property type="match status" value="2"/>
</dbReference>
<dbReference type="PROSITE" id="PS00954">
    <property type="entry name" value="IGP_DEHYDRATASE_1"/>
    <property type="match status" value="1"/>
</dbReference>
<dbReference type="PROSITE" id="PS00955">
    <property type="entry name" value="IGP_DEHYDRATASE_2"/>
    <property type="match status" value="1"/>
</dbReference>
<proteinExistence type="inferred from homology"/>
<organism>
    <name type="scientific">Bacillus velezensis (strain DSM 23117 / BGSC 10A6 / LMG 26770 / FZB42)</name>
    <name type="common">Bacillus amyloliquefaciens subsp. plantarum</name>
    <dbReference type="NCBI Taxonomy" id="326423"/>
    <lineage>
        <taxon>Bacteria</taxon>
        <taxon>Bacillati</taxon>
        <taxon>Bacillota</taxon>
        <taxon>Bacilli</taxon>
        <taxon>Bacillales</taxon>
        <taxon>Bacillaceae</taxon>
        <taxon>Bacillus</taxon>
        <taxon>Bacillus amyloliquefaciens group</taxon>
    </lineage>
</organism>
<gene>
    <name evidence="1" type="primary">hisB</name>
    <name type="ordered locus">RBAM_032110</name>
</gene>
<evidence type="ECO:0000255" key="1">
    <source>
        <dbReference type="HAMAP-Rule" id="MF_00076"/>
    </source>
</evidence>
<keyword id="KW-0028">Amino-acid biosynthesis</keyword>
<keyword id="KW-0963">Cytoplasm</keyword>
<keyword id="KW-0368">Histidine biosynthesis</keyword>
<keyword id="KW-0456">Lyase</keyword>
<feature type="chain" id="PRO_1000010243" description="Imidazoleglycerol-phosphate dehydratase">
    <location>
        <begin position="1"/>
        <end position="194"/>
    </location>
</feature>
<reference key="1">
    <citation type="journal article" date="2007" name="Nat. Biotechnol.">
        <title>Comparative analysis of the complete genome sequence of the plant growth-promoting bacterium Bacillus amyloliquefaciens FZB42.</title>
        <authorList>
            <person name="Chen X.H."/>
            <person name="Koumoutsi A."/>
            <person name="Scholz R."/>
            <person name="Eisenreich A."/>
            <person name="Schneider K."/>
            <person name="Heinemeyer I."/>
            <person name="Morgenstern B."/>
            <person name="Voss B."/>
            <person name="Hess W.R."/>
            <person name="Reva O."/>
            <person name="Junge H."/>
            <person name="Voigt B."/>
            <person name="Jungblut P.R."/>
            <person name="Vater J."/>
            <person name="Suessmuth R."/>
            <person name="Liesegang H."/>
            <person name="Strittmatter A."/>
            <person name="Gottschalk G."/>
            <person name="Borriss R."/>
        </authorList>
    </citation>
    <scope>NUCLEOTIDE SEQUENCE [LARGE SCALE GENOMIC DNA]</scope>
    <source>
        <strain>DSM 23117 / BGSC 10A6 / LMG 26770 / FZB42</strain>
    </source>
</reference>
<comment type="catalytic activity">
    <reaction evidence="1">
        <text>D-erythro-1-(imidazol-4-yl)glycerol 3-phosphate = 3-(imidazol-4-yl)-2-oxopropyl phosphate + H2O</text>
        <dbReference type="Rhea" id="RHEA:11040"/>
        <dbReference type="ChEBI" id="CHEBI:15377"/>
        <dbReference type="ChEBI" id="CHEBI:57766"/>
        <dbReference type="ChEBI" id="CHEBI:58278"/>
        <dbReference type="EC" id="4.2.1.19"/>
    </reaction>
</comment>
<comment type="pathway">
    <text evidence="1">Amino-acid biosynthesis; L-histidine biosynthesis; L-histidine from 5-phospho-alpha-D-ribose 1-diphosphate: step 6/9.</text>
</comment>
<comment type="subcellular location">
    <subcellularLocation>
        <location evidence="1">Cytoplasm</location>
    </subcellularLocation>
</comment>
<comment type="similarity">
    <text evidence="1">Belongs to the imidazoleglycerol-phosphate dehydratase family.</text>
</comment>
<sequence length="194" mass="21497">MRKAERARTTNETDIKLAFEIDGEGKADISTDVPFMTHMLDLFTKHGQFNLTVDAKGDTEIDDHHTTEDIGICLGQAFLEALGDKKGIKRYGSALVPMDEALAQVAVDLSNRPHLEMRAAFPQAKVGTFDTELVHEFLWKLALEARMNLHVIVHYGTNTHHMIEAVFKALGRALDEASSIDPRVKGVPSTKGML</sequence>
<protein>
    <recommendedName>
        <fullName evidence="1">Imidazoleglycerol-phosphate dehydratase</fullName>
        <shortName evidence="1">IGPD</shortName>
        <ecNumber evidence="1">4.2.1.19</ecNumber>
    </recommendedName>
</protein>
<accession>A7Z965</accession>
<name>HIS7_BACVZ</name>